<accession>P21556</accession>
<name>PTAFR_CAVPO</name>
<proteinExistence type="evidence at transcript level"/>
<protein>
    <recommendedName>
        <fullName>Platelet-activating factor receptor</fullName>
        <shortName>PAF-R</shortName>
        <shortName>PAFr</shortName>
    </recommendedName>
</protein>
<evidence type="ECO:0000250" key="1"/>
<evidence type="ECO:0000255" key="2"/>
<evidence type="ECO:0000255" key="3">
    <source>
        <dbReference type="PROSITE-ProRule" id="PRU00521"/>
    </source>
</evidence>
<comment type="function">
    <text>Receptor for platelet activating factor, a chemotactic phospholipid mediator that possesses potent inflammatory, smooth-muscle contractile and hypotensive activity. Seems to mediate its action via a G protein that activates a phosphatidylinositol-calcium second messenger system.</text>
</comment>
<comment type="subunit">
    <text evidence="1">Interacts with ARRB1.</text>
</comment>
<comment type="subcellular location">
    <subcellularLocation>
        <location>Cell membrane</location>
        <topology>Multi-pass membrane protein</topology>
    </subcellularLocation>
</comment>
<comment type="similarity">
    <text evidence="3">Belongs to the G-protein coupled receptor 1 family.</text>
</comment>
<organism>
    <name type="scientific">Cavia porcellus</name>
    <name type="common">Guinea pig</name>
    <dbReference type="NCBI Taxonomy" id="10141"/>
    <lineage>
        <taxon>Eukaryota</taxon>
        <taxon>Metazoa</taxon>
        <taxon>Chordata</taxon>
        <taxon>Craniata</taxon>
        <taxon>Vertebrata</taxon>
        <taxon>Euteleostomi</taxon>
        <taxon>Mammalia</taxon>
        <taxon>Eutheria</taxon>
        <taxon>Euarchontoglires</taxon>
        <taxon>Glires</taxon>
        <taxon>Rodentia</taxon>
        <taxon>Hystricomorpha</taxon>
        <taxon>Caviidae</taxon>
        <taxon>Cavia</taxon>
    </lineage>
</organism>
<keyword id="KW-1003">Cell membrane</keyword>
<keyword id="KW-0145">Chemotaxis</keyword>
<keyword id="KW-1015">Disulfide bond</keyword>
<keyword id="KW-0297">G-protein coupled receptor</keyword>
<keyword id="KW-0325">Glycoprotein</keyword>
<keyword id="KW-0472">Membrane</keyword>
<keyword id="KW-0675">Receptor</keyword>
<keyword id="KW-1185">Reference proteome</keyword>
<keyword id="KW-0807">Transducer</keyword>
<keyword id="KW-0812">Transmembrane</keyword>
<keyword id="KW-1133">Transmembrane helix</keyword>
<dbReference type="EMBL" id="X56736">
    <property type="protein sequence ID" value="CAA40060.1"/>
    <property type="molecule type" value="mRNA"/>
</dbReference>
<dbReference type="PIR" id="S13638">
    <property type="entry name" value="S13638"/>
</dbReference>
<dbReference type="RefSeq" id="XP_005004316.1">
    <property type="nucleotide sequence ID" value="XM_005004259.2"/>
</dbReference>
<dbReference type="RefSeq" id="XP_013009648.1">
    <property type="nucleotide sequence ID" value="XM_013154194.1"/>
</dbReference>
<dbReference type="RefSeq" id="XP_013009649.1">
    <property type="nucleotide sequence ID" value="XM_013154195.1"/>
</dbReference>
<dbReference type="SMR" id="P21556"/>
<dbReference type="FunCoup" id="P21556">
    <property type="interactions" value="1284"/>
</dbReference>
<dbReference type="STRING" id="10141.ENSCPOP00000028935"/>
<dbReference type="BindingDB" id="P21556"/>
<dbReference type="ChEMBL" id="CHEMBL5136"/>
<dbReference type="DrugCentral" id="P21556"/>
<dbReference type="GlyCosmos" id="P21556">
    <property type="glycosylation" value="2 sites, No reported glycans"/>
</dbReference>
<dbReference type="ABCD" id="P21556">
    <property type="antibodies" value="1 sequenced antibody"/>
</dbReference>
<dbReference type="Ensembl" id="ENSCPOT00000042353.1">
    <property type="protein sequence ID" value="ENSCPOP00000028935.1"/>
    <property type="gene ID" value="ENSCPOG00000031748.1"/>
</dbReference>
<dbReference type="GeneID" id="100720710"/>
<dbReference type="KEGG" id="cpoc:100720710"/>
<dbReference type="CTD" id="5724"/>
<dbReference type="VEuPathDB" id="HostDB:ENSCPOG00000031748"/>
<dbReference type="eggNOG" id="ENOG502QTQI">
    <property type="taxonomic scope" value="Eukaryota"/>
</dbReference>
<dbReference type="GeneTree" id="ENSGT01110000267167"/>
<dbReference type="HOGENOM" id="CLU_009579_8_2_1"/>
<dbReference type="InParanoid" id="P21556"/>
<dbReference type="OMA" id="WNIVIIR"/>
<dbReference type="OrthoDB" id="5985406at2759"/>
<dbReference type="TreeFam" id="TF350009"/>
<dbReference type="PRO" id="PR:P21556"/>
<dbReference type="Proteomes" id="UP000005447">
    <property type="component" value="Unassembled WGS sequence"/>
</dbReference>
<dbReference type="Bgee" id="ENSCPOG00000031748">
    <property type="expression patterns" value="Expressed in thyroid gland and 10 other cell types or tissues"/>
</dbReference>
<dbReference type="GO" id="GO:0005886">
    <property type="term" value="C:plasma membrane"/>
    <property type="evidence" value="ECO:0007669"/>
    <property type="project" value="UniProtKB-SubCell"/>
</dbReference>
<dbReference type="GO" id="GO:0045028">
    <property type="term" value="F:G protein-coupled purinergic nucleotide receptor activity"/>
    <property type="evidence" value="ECO:0007669"/>
    <property type="project" value="TreeGrafter"/>
</dbReference>
<dbReference type="GO" id="GO:0001530">
    <property type="term" value="F:lipopolysaccharide binding"/>
    <property type="evidence" value="ECO:0007669"/>
    <property type="project" value="Ensembl"/>
</dbReference>
<dbReference type="GO" id="GO:0001875">
    <property type="term" value="F:lipopolysaccharide immune receptor activity"/>
    <property type="evidence" value="ECO:0007669"/>
    <property type="project" value="Ensembl"/>
</dbReference>
<dbReference type="GO" id="GO:0005543">
    <property type="term" value="F:phospholipid binding"/>
    <property type="evidence" value="ECO:0007669"/>
    <property type="project" value="Ensembl"/>
</dbReference>
<dbReference type="GO" id="GO:0004992">
    <property type="term" value="F:platelet activating factor receptor activity"/>
    <property type="evidence" value="ECO:0007669"/>
    <property type="project" value="Ensembl"/>
</dbReference>
<dbReference type="GO" id="GO:0006935">
    <property type="term" value="P:chemotaxis"/>
    <property type="evidence" value="ECO:0007669"/>
    <property type="project" value="UniProtKB-KW"/>
</dbReference>
<dbReference type="GO" id="GO:0006954">
    <property type="term" value="P:inflammatory response"/>
    <property type="evidence" value="ECO:0007669"/>
    <property type="project" value="Ensembl"/>
</dbReference>
<dbReference type="GO" id="GO:0032959">
    <property type="term" value="P:inositol trisphosphate biosynthetic process"/>
    <property type="evidence" value="ECO:0007669"/>
    <property type="project" value="Ensembl"/>
</dbReference>
<dbReference type="GO" id="GO:0007200">
    <property type="term" value="P:phospholipase C-activating G protein-coupled receptor signaling pathway"/>
    <property type="evidence" value="ECO:0007669"/>
    <property type="project" value="Ensembl"/>
</dbReference>
<dbReference type="CDD" id="cd15147">
    <property type="entry name" value="7tmA_PAFR"/>
    <property type="match status" value="1"/>
</dbReference>
<dbReference type="FunFam" id="1.20.1070.10:FF:000204">
    <property type="entry name" value="platelet-activating factor receptor"/>
    <property type="match status" value="1"/>
</dbReference>
<dbReference type="Gene3D" id="1.20.1070.10">
    <property type="entry name" value="Rhodopsin 7-helix transmembrane proteins"/>
    <property type="match status" value="1"/>
</dbReference>
<dbReference type="InterPro" id="IPR000276">
    <property type="entry name" value="GPCR_Rhodpsn"/>
</dbReference>
<dbReference type="InterPro" id="IPR017452">
    <property type="entry name" value="GPCR_Rhodpsn_7TM"/>
</dbReference>
<dbReference type="InterPro" id="IPR002282">
    <property type="entry name" value="PAF_rcpt"/>
</dbReference>
<dbReference type="PANTHER" id="PTHR24233">
    <property type="entry name" value="P2Y PURINOCEPTOR-RELATED G-PROTEIN COUPLED RECEPTOR"/>
    <property type="match status" value="1"/>
</dbReference>
<dbReference type="PANTHER" id="PTHR24233:SF6">
    <property type="entry name" value="PLATELET-ACTIVATING FACTOR RECEPTOR"/>
    <property type="match status" value="1"/>
</dbReference>
<dbReference type="Pfam" id="PF00001">
    <property type="entry name" value="7tm_1"/>
    <property type="match status" value="1"/>
</dbReference>
<dbReference type="PRINTS" id="PR00237">
    <property type="entry name" value="GPCRRHODOPSN"/>
</dbReference>
<dbReference type="PRINTS" id="PR01153">
    <property type="entry name" value="PAFRECEPTOR"/>
</dbReference>
<dbReference type="SUPFAM" id="SSF81321">
    <property type="entry name" value="Family A G protein-coupled receptor-like"/>
    <property type="match status" value="1"/>
</dbReference>
<dbReference type="PROSITE" id="PS00237">
    <property type="entry name" value="G_PROTEIN_RECEP_F1_1"/>
    <property type="match status" value="1"/>
</dbReference>
<dbReference type="PROSITE" id="PS50262">
    <property type="entry name" value="G_PROTEIN_RECEP_F1_2"/>
    <property type="match status" value="1"/>
</dbReference>
<gene>
    <name type="primary">PTAFR</name>
</gene>
<reference key="1">
    <citation type="journal article" date="1991" name="Nature">
        <title>Cloning by functional expression of platelet-activating factor receptor from guinea-pig lung.</title>
        <authorList>
            <person name="Honda Z."/>
            <person name="Nakamura M."/>
            <person name="Miki I."/>
            <person name="Minami M."/>
            <person name="Watanabe T."/>
            <person name="Seyama Y."/>
            <person name="Okado H."/>
            <person name="Toh H."/>
            <person name="Ito K."/>
            <person name="Miyamoto T."/>
            <person name="Shimizu T."/>
        </authorList>
    </citation>
    <scope>NUCLEOTIDE SEQUENCE [MRNA]</scope>
    <source>
        <tissue>Lung</tissue>
    </source>
</reference>
<feature type="chain" id="PRO_0000070091" description="Platelet-activating factor receptor">
    <location>
        <begin position="1"/>
        <end position="342"/>
    </location>
</feature>
<feature type="topological domain" description="Extracellular" evidence="2">
    <location>
        <begin position="1"/>
        <end position="16"/>
    </location>
</feature>
<feature type="transmembrane region" description="Helical; Name=1" evidence="2">
    <location>
        <begin position="17"/>
        <end position="38"/>
    </location>
</feature>
<feature type="topological domain" description="Cytoplasmic" evidence="2">
    <location>
        <begin position="39"/>
        <end position="54"/>
    </location>
</feature>
<feature type="transmembrane region" description="Helical; Name=2" evidence="2">
    <location>
        <begin position="55"/>
        <end position="74"/>
    </location>
</feature>
<feature type="topological domain" description="Extracellular" evidence="2">
    <location>
        <begin position="75"/>
        <end position="91"/>
    </location>
</feature>
<feature type="transmembrane region" description="Helical; Name=3" evidence="2">
    <location>
        <begin position="92"/>
        <end position="113"/>
    </location>
</feature>
<feature type="topological domain" description="Cytoplasmic" evidence="2">
    <location>
        <begin position="114"/>
        <end position="133"/>
    </location>
</feature>
<feature type="transmembrane region" description="Helical; Name=4" evidence="2">
    <location>
        <begin position="134"/>
        <end position="155"/>
    </location>
</feature>
<feature type="topological domain" description="Extracellular" evidence="2">
    <location>
        <begin position="156"/>
        <end position="184"/>
    </location>
</feature>
<feature type="transmembrane region" description="Helical; Name=5" evidence="2">
    <location>
        <begin position="185"/>
        <end position="205"/>
    </location>
</feature>
<feature type="topological domain" description="Cytoplasmic" evidence="2">
    <location>
        <begin position="206"/>
        <end position="233"/>
    </location>
</feature>
<feature type="transmembrane region" description="Helical; Name=6" evidence="2">
    <location>
        <begin position="234"/>
        <end position="254"/>
    </location>
</feature>
<feature type="topological domain" description="Extracellular" evidence="2">
    <location>
        <begin position="255"/>
        <end position="276"/>
    </location>
</feature>
<feature type="transmembrane region" description="Helical; Name=7" evidence="2">
    <location>
        <begin position="277"/>
        <end position="296"/>
    </location>
</feature>
<feature type="topological domain" description="Cytoplasmic" evidence="2">
    <location>
        <begin position="297"/>
        <end position="342"/>
    </location>
</feature>
<feature type="glycosylation site" description="N-linked (GlcNAc...) asparagine" evidence="2">
    <location>
        <position position="4"/>
    </location>
</feature>
<feature type="glycosylation site" description="N-linked (GlcNAc...) asparagine" evidence="2">
    <location>
        <position position="169"/>
    </location>
</feature>
<feature type="disulfide bond" evidence="3">
    <location>
        <begin position="90"/>
        <end position="173"/>
    </location>
</feature>
<sequence length="342" mass="38984">MELNSSSRVDSEFRYTLFPIVYSIIFVLGIIANGYVLWVFARLYPSKKLNEIKIFMVNLTVADLLFLITLPLWIVYYSNQGNWFLPKFLCNLAGCLFFINTYCSVAFLGVITYNRFQAVKYPIKTAQATTRKRGIALSLVIWVAIVAAASYFLVMDSTNVVSNKAGSGNITRCFEHYEKGSKPVLIIHICIVLGFFIVFLLILFCNLVIIHTLLRQPVKQQRNAEVRRRALWMVCTVLAVFVICFVPHHMVQLPWTLAELGMWPSSNHQAINDAHQVTLCLLSTNCVLDPVIYCFLTKKFRKHLSEKLNIMRSSQKCSRVTTDTGTEMAIPINHTPVNPIKN</sequence>